<reference key="1">
    <citation type="journal article" date="2007" name="Science">
        <title>The Fusarium graminearum genome reveals a link between localized polymorphism and pathogen specialization.</title>
        <authorList>
            <person name="Cuomo C.A."/>
            <person name="Gueldener U."/>
            <person name="Xu J.-R."/>
            <person name="Trail F."/>
            <person name="Turgeon B.G."/>
            <person name="Di Pietro A."/>
            <person name="Walton J.D."/>
            <person name="Ma L.-J."/>
            <person name="Baker S.E."/>
            <person name="Rep M."/>
            <person name="Adam G."/>
            <person name="Antoniw J."/>
            <person name="Baldwin T."/>
            <person name="Calvo S.E."/>
            <person name="Chang Y.-L."/>
            <person name="DeCaprio D."/>
            <person name="Gale L.R."/>
            <person name="Gnerre S."/>
            <person name="Goswami R.S."/>
            <person name="Hammond-Kosack K."/>
            <person name="Harris L.J."/>
            <person name="Hilburn K."/>
            <person name="Kennell J.C."/>
            <person name="Kroken S."/>
            <person name="Magnuson J.K."/>
            <person name="Mannhaupt G."/>
            <person name="Mauceli E.W."/>
            <person name="Mewes H.-W."/>
            <person name="Mitterbauer R."/>
            <person name="Muehlbauer G."/>
            <person name="Muensterkoetter M."/>
            <person name="Nelson D."/>
            <person name="O'Donnell K."/>
            <person name="Ouellet T."/>
            <person name="Qi W."/>
            <person name="Quesneville H."/>
            <person name="Roncero M.I.G."/>
            <person name="Seong K.-Y."/>
            <person name="Tetko I.V."/>
            <person name="Urban M."/>
            <person name="Waalwijk C."/>
            <person name="Ward T.J."/>
            <person name="Yao J."/>
            <person name="Birren B.W."/>
            <person name="Kistler H.C."/>
        </authorList>
    </citation>
    <scope>NUCLEOTIDE SEQUENCE [LARGE SCALE GENOMIC DNA]</scope>
    <source>
        <strain>ATCC MYA-4620 / CBS 123657 / FGSC 9075 / NRRL 31084 / PH-1</strain>
    </source>
</reference>
<reference key="2">
    <citation type="journal article" date="2010" name="Nature">
        <title>Comparative genomics reveals mobile pathogenicity chromosomes in Fusarium.</title>
        <authorList>
            <person name="Ma L.-J."/>
            <person name="van der Does H.C."/>
            <person name="Borkovich K.A."/>
            <person name="Coleman J.J."/>
            <person name="Daboussi M.-J."/>
            <person name="Di Pietro A."/>
            <person name="Dufresne M."/>
            <person name="Freitag M."/>
            <person name="Grabherr M."/>
            <person name="Henrissat B."/>
            <person name="Houterman P.M."/>
            <person name="Kang S."/>
            <person name="Shim W.-B."/>
            <person name="Woloshuk C."/>
            <person name="Xie X."/>
            <person name="Xu J.-R."/>
            <person name="Antoniw J."/>
            <person name="Baker S.E."/>
            <person name="Bluhm B.H."/>
            <person name="Breakspear A."/>
            <person name="Brown D.W."/>
            <person name="Butchko R.A.E."/>
            <person name="Chapman S."/>
            <person name="Coulson R."/>
            <person name="Coutinho P.M."/>
            <person name="Danchin E.G.J."/>
            <person name="Diener A."/>
            <person name="Gale L.R."/>
            <person name="Gardiner D.M."/>
            <person name="Goff S."/>
            <person name="Hammond-Kosack K.E."/>
            <person name="Hilburn K."/>
            <person name="Hua-Van A."/>
            <person name="Jonkers W."/>
            <person name="Kazan K."/>
            <person name="Kodira C.D."/>
            <person name="Koehrsen M."/>
            <person name="Kumar L."/>
            <person name="Lee Y.-H."/>
            <person name="Li L."/>
            <person name="Manners J.M."/>
            <person name="Miranda-Saavedra D."/>
            <person name="Mukherjee M."/>
            <person name="Park G."/>
            <person name="Park J."/>
            <person name="Park S.-Y."/>
            <person name="Proctor R.H."/>
            <person name="Regev A."/>
            <person name="Ruiz-Roldan M.C."/>
            <person name="Sain D."/>
            <person name="Sakthikumar S."/>
            <person name="Sykes S."/>
            <person name="Schwartz D.C."/>
            <person name="Turgeon B.G."/>
            <person name="Wapinski I."/>
            <person name="Yoder O."/>
            <person name="Young S."/>
            <person name="Zeng Q."/>
            <person name="Zhou S."/>
            <person name="Galagan J."/>
            <person name="Cuomo C.A."/>
            <person name="Kistler H.C."/>
            <person name="Rep M."/>
        </authorList>
    </citation>
    <scope>GENOME REANNOTATION</scope>
    <source>
        <strain>ATCC MYA-4620 / CBS 123657 / FGSC 9075 / NRRL 31084 / PH-1</strain>
    </source>
</reference>
<reference key="3">
    <citation type="journal article" date="2015" name="BMC Genomics">
        <title>The completed genome sequence of the pathogenic ascomycete fungus Fusarium graminearum.</title>
        <authorList>
            <person name="King R."/>
            <person name="Urban M."/>
            <person name="Hammond-Kosack M.C.U."/>
            <person name="Hassani-Pak K."/>
            <person name="Hammond-Kosack K.E."/>
        </authorList>
    </citation>
    <scope>NUCLEOTIDE SEQUENCE [LARGE SCALE GENOMIC DNA]</scope>
    <source>
        <strain>ATCC MYA-4620 / CBS 123657 / FGSC 9075 / NRRL 31084 / PH-1</strain>
    </source>
</reference>
<keyword id="KW-0963">Cytoplasm</keyword>
<keyword id="KW-0408">Iron</keyword>
<keyword id="KW-0411">Iron-sulfur</keyword>
<keyword id="KW-0479">Metal-binding</keyword>
<keyword id="KW-1185">Reference proteome</keyword>
<accession>Q4I5M4</accession>
<accession>A0A0E0SB53</accession>
<accession>V6RGQ8</accession>
<name>DPH2_GIBZE</name>
<evidence type="ECO:0000250" key="1">
    <source>
        <dbReference type="UniProtKB" id="P32461"/>
    </source>
</evidence>
<evidence type="ECO:0000256" key="2">
    <source>
        <dbReference type="SAM" id="MobiDB-lite"/>
    </source>
</evidence>
<evidence type="ECO:0000305" key="3"/>
<sequence length="535" mass="58587">MASELSSAPVLSTPDDHILEVPAADSIPTSTLSDDALRTTYEIVRTADEIRAGGWKRIGLQFPDFMLVDAPRVVEALSKEINTHDQEEAKPERRIYVLADSSYSACCVDEIAAEHVSADVVVHYGRTCLSPTSHLPAIYVYTTHDLDYEVTINEIKKEFSDKTVKLVIMADLTYQNHVDKVVSLLKEQGYNDAVSTEVTRDPAALIPNRKILSDETHDDEHWKAYSIIHISDPPSALLLALYTRFASLHVLSTPSPALENPTMRTAGLLRRRFAKVLALASAGVIGILVNTLSVANYLSSINTLRERIARADKKSYTIVVGKLNPAKLANFAEIEGWVVVGCWESGLIEDDAGYWRPVITPFELEVALMSEEERVWGGEWWGGIEKLGLNDKPEDASKESEGAVAEEEVEFEDVAGGVEGEESAPPEFDMRTGKLISSSRPMRLPVRKNPSTTAETEANSDGQPTSTQQNDSLIKRSVGELASINGVASPGAEFLRSGRTWQGLGTDFDNEASTLVEEGRSGVARGYEVGESGRH</sequence>
<proteinExistence type="inferred from homology"/>
<organism>
    <name type="scientific">Gibberella zeae (strain ATCC MYA-4620 / CBS 123657 / FGSC 9075 / NRRL 31084 / PH-1)</name>
    <name type="common">Wheat head blight fungus</name>
    <name type="synonym">Fusarium graminearum</name>
    <dbReference type="NCBI Taxonomy" id="229533"/>
    <lineage>
        <taxon>Eukaryota</taxon>
        <taxon>Fungi</taxon>
        <taxon>Dikarya</taxon>
        <taxon>Ascomycota</taxon>
        <taxon>Pezizomycotina</taxon>
        <taxon>Sordariomycetes</taxon>
        <taxon>Hypocreomycetidae</taxon>
        <taxon>Hypocreales</taxon>
        <taxon>Nectriaceae</taxon>
        <taxon>Fusarium</taxon>
    </lineage>
</organism>
<protein>
    <recommendedName>
        <fullName evidence="3">2-(3-amino-3-carboxypropyl)histidine synthase subunit 2</fullName>
    </recommendedName>
    <alternativeName>
        <fullName>Diphthamide biosynthesis protein 2</fullName>
    </alternativeName>
    <alternativeName>
        <fullName evidence="3">Diphtheria toxin resistance protein 2</fullName>
    </alternativeName>
    <alternativeName>
        <fullName evidence="3">S-adenosyl-L-methionine:L-histidine 3-amino-3-carboxypropyltransferase 2</fullName>
    </alternativeName>
</protein>
<feature type="chain" id="PRO_0000083389" description="2-(3-amino-3-carboxypropyl)histidine synthase subunit 2">
    <location>
        <begin position="1"/>
        <end position="535"/>
    </location>
</feature>
<feature type="region of interest" description="Disordered" evidence="2">
    <location>
        <begin position="390"/>
        <end position="471"/>
    </location>
</feature>
<feature type="region of interest" description="Disordered" evidence="2">
    <location>
        <begin position="512"/>
        <end position="535"/>
    </location>
</feature>
<feature type="compositionally biased region" description="Basic and acidic residues" evidence="2">
    <location>
        <begin position="390"/>
        <end position="401"/>
    </location>
</feature>
<feature type="compositionally biased region" description="Acidic residues" evidence="2">
    <location>
        <begin position="404"/>
        <end position="424"/>
    </location>
</feature>
<feature type="compositionally biased region" description="Polar residues" evidence="2">
    <location>
        <begin position="449"/>
        <end position="471"/>
    </location>
</feature>
<feature type="binding site" evidence="1">
    <location>
        <position position="107"/>
    </location>
    <ligand>
        <name>[4Fe-4S] cluster</name>
        <dbReference type="ChEBI" id="CHEBI:49883"/>
    </ligand>
</feature>
<feature type="binding site" evidence="1">
    <location>
        <position position="128"/>
    </location>
    <ligand>
        <name>[4Fe-4S] cluster</name>
        <dbReference type="ChEBI" id="CHEBI:49883"/>
    </ligand>
</feature>
<feature type="binding site" evidence="1">
    <location>
        <position position="342"/>
    </location>
    <ligand>
        <name>[4Fe-4S] cluster</name>
        <dbReference type="ChEBI" id="CHEBI:49883"/>
    </ligand>
</feature>
<gene>
    <name type="primary">DPH2</name>
    <name type="ORF">FGRRES_07484</name>
    <name type="ORF">FGSG_07484</name>
</gene>
<comment type="function">
    <text evidence="1">Required for the first step of diphthamide biosynthesis, a post-translational modification of histidine which occurs in elongation factor 2. DPH1 and DPH2 transfer a 3-amino-3-carboxypropyl (ACP) group from S-adenosyl-L-methionine (SAM) to a histidine residue, the reaction is assisted by a reduction system comprising DPH3 and a NADH-dependent reductase, predominantly CBR1 (By similarity). Facilitates the reduction of the catalytic iron-sulfur cluster found in the DPH1 subunit (By similarity).</text>
</comment>
<comment type="cofactor">
    <cofactor evidence="1">
        <name>[4Fe-4S] cluster</name>
        <dbReference type="ChEBI" id="CHEBI:49883"/>
    </cofactor>
    <text evidence="1">Binds 1 [4Fe-4S] cluster per subunit. The cluster facilitates the reduction of the catalytic iron-sulfur cluster in the DPH1 subunit.</text>
</comment>
<comment type="pathway">
    <text evidence="1">Protein modification; peptidyl-diphthamide biosynthesis.</text>
</comment>
<comment type="subunit">
    <text evidence="1">Component of the 2-(3-amino-3-carboxypropyl)histidine synthase complex composed of DPH1, DPH2, DPH3 and a NADH-dependent reductase, predominantly CBR1.</text>
</comment>
<comment type="subcellular location">
    <subcellularLocation>
        <location evidence="1">Cytoplasm</location>
    </subcellularLocation>
</comment>
<comment type="similarity">
    <text evidence="3">Belongs to the DPH1/DPH2 family. DPH2 subfamily.</text>
</comment>
<dbReference type="EMBL" id="DS231666">
    <property type="protein sequence ID" value="ESU13753.1"/>
    <property type="molecule type" value="Genomic_DNA"/>
</dbReference>
<dbReference type="EMBL" id="HG970335">
    <property type="protein sequence ID" value="CEF83666.1"/>
    <property type="molecule type" value="Genomic_DNA"/>
</dbReference>
<dbReference type="RefSeq" id="XP_011327260.1">
    <property type="nucleotide sequence ID" value="XM_011328958.1"/>
</dbReference>
<dbReference type="SMR" id="Q4I5M4"/>
<dbReference type="FunCoup" id="Q4I5M4">
    <property type="interactions" value="967"/>
</dbReference>
<dbReference type="STRING" id="229533.Q4I5M4"/>
<dbReference type="GeneID" id="23554559"/>
<dbReference type="KEGG" id="fgr:FGSG_07484"/>
<dbReference type="VEuPathDB" id="FungiDB:FGRAMPH1_01G24927"/>
<dbReference type="eggNOG" id="KOG2648">
    <property type="taxonomic scope" value="Eukaryota"/>
</dbReference>
<dbReference type="HOGENOM" id="CLU_015210_1_1_1"/>
<dbReference type="InParanoid" id="Q4I5M4"/>
<dbReference type="OrthoDB" id="126452at110618"/>
<dbReference type="UniPathway" id="UPA00559"/>
<dbReference type="Proteomes" id="UP000070720">
    <property type="component" value="Chromosome 4"/>
</dbReference>
<dbReference type="GO" id="GO:0120513">
    <property type="term" value="C:2-(3-amino-3-carboxypropyl)histidine synthase complex"/>
    <property type="evidence" value="ECO:0000250"/>
    <property type="project" value="UniProtKB"/>
</dbReference>
<dbReference type="GO" id="GO:0005737">
    <property type="term" value="C:cytoplasm"/>
    <property type="evidence" value="ECO:0007669"/>
    <property type="project" value="UniProtKB-SubCell"/>
</dbReference>
<dbReference type="GO" id="GO:0090560">
    <property type="term" value="F:2-(3-amino-3-carboxypropyl)histidine synthase activity"/>
    <property type="evidence" value="ECO:0007669"/>
    <property type="project" value="UniProtKB-EC"/>
</dbReference>
<dbReference type="GO" id="GO:0051539">
    <property type="term" value="F:4 iron, 4 sulfur cluster binding"/>
    <property type="evidence" value="ECO:0000250"/>
    <property type="project" value="UniProtKB"/>
</dbReference>
<dbReference type="GO" id="GO:0046872">
    <property type="term" value="F:metal ion binding"/>
    <property type="evidence" value="ECO:0007669"/>
    <property type="project" value="UniProtKB-KW"/>
</dbReference>
<dbReference type="GO" id="GO:0017183">
    <property type="term" value="P:protein histidyl modification to diphthamide"/>
    <property type="evidence" value="ECO:0000250"/>
    <property type="project" value="UniProtKB"/>
</dbReference>
<dbReference type="FunFam" id="3.40.50.11840:FF:000002">
    <property type="entry name" value="2-(3-amino-3-carboxypropyl)histidine synthase subunit 2"/>
    <property type="match status" value="1"/>
</dbReference>
<dbReference type="FunFam" id="3.40.50.11860:FF:000001">
    <property type="entry name" value="2-(3-amino-3-carboxypropyl)histidine synthase subunit 2"/>
    <property type="match status" value="1"/>
</dbReference>
<dbReference type="Gene3D" id="3.40.50.11840">
    <property type="entry name" value="Diphthamide synthesis DPH1/DPH2 domain 1"/>
    <property type="match status" value="1"/>
</dbReference>
<dbReference type="Gene3D" id="3.40.50.11860">
    <property type="entry name" value="Diphthamide synthesis DPH1/DPH2 domain 3"/>
    <property type="match status" value="1"/>
</dbReference>
<dbReference type="InterPro" id="IPR010014">
    <property type="entry name" value="DHP2"/>
</dbReference>
<dbReference type="InterPro" id="IPR016435">
    <property type="entry name" value="DPH1/DPH2"/>
</dbReference>
<dbReference type="InterPro" id="IPR042263">
    <property type="entry name" value="DPH1/DPH2_1"/>
</dbReference>
<dbReference type="InterPro" id="IPR042265">
    <property type="entry name" value="DPH1/DPH2_3"/>
</dbReference>
<dbReference type="NCBIfam" id="TIGR00322">
    <property type="entry name" value="diphth2_R"/>
    <property type="match status" value="1"/>
</dbReference>
<dbReference type="NCBIfam" id="TIGR00272">
    <property type="entry name" value="DPH2"/>
    <property type="match status" value="1"/>
</dbReference>
<dbReference type="PANTHER" id="PTHR10762:SF2">
    <property type="entry name" value="2-(3-AMINO-3-CARBOXYPROPYL)HISTIDINE SYNTHASE SUBUNIT 2"/>
    <property type="match status" value="1"/>
</dbReference>
<dbReference type="PANTHER" id="PTHR10762">
    <property type="entry name" value="DIPHTHAMIDE BIOSYNTHESIS PROTEIN"/>
    <property type="match status" value="1"/>
</dbReference>
<dbReference type="Pfam" id="PF01866">
    <property type="entry name" value="Diphthamide_syn"/>
    <property type="match status" value="1"/>
</dbReference>
<dbReference type="SFLD" id="SFLDG01121">
    <property type="entry name" value="Diphthamide_biosynthesis"/>
    <property type="match status" value="1"/>
</dbReference>
<dbReference type="SFLD" id="SFLDF00408">
    <property type="entry name" value="Diphthamide_biosynthesis_famil"/>
    <property type="match status" value="1"/>
</dbReference>
<dbReference type="SFLD" id="SFLDS00032">
    <property type="entry name" value="Radical_SAM_3-amino-3-carboxyp"/>
    <property type="match status" value="1"/>
</dbReference>